<evidence type="ECO:0000255" key="1">
    <source>
        <dbReference type="HAMAP-Rule" id="MF_00860"/>
    </source>
</evidence>
<evidence type="ECO:0000269" key="2">
    <source>
    </source>
</evidence>
<evidence type="ECO:0000303" key="3">
    <source>
    </source>
</evidence>
<organism>
    <name type="scientific">Mesembryanthemum crystallinum</name>
    <name type="common">Common ice plant</name>
    <name type="synonym">Cryophytum crystallinum</name>
    <dbReference type="NCBI Taxonomy" id="3544"/>
    <lineage>
        <taxon>Eukaryota</taxon>
        <taxon>Viridiplantae</taxon>
        <taxon>Streptophyta</taxon>
        <taxon>Embryophyta</taxon>
        <taxon>Tracheophyta</taxon>
        <taxon>Spermatophyta</taxon>
        <taxon>Magnoliopsida</taxon>
        <taxon>eudicotyledons</taxon>
        <taxon>Gunneridae</taxon>
        <taxon>Pentapetalae</taxon>
        <taxon>Caryophyllales</taxon>
        <taxon>Aizoaceae</taxon>
        <taxon>Mesembryanthemum</taxon>
        <taxon>Mesembryanthemum subgen. Cryophytum</taxon>
    </lineage>
</organism>
<dbReference type="EMBL" id="L10215">
    <property type="protein sequence ID" value="AAA03696.1"/>
    <property type="molecule type" value="Unassigned_DNA"/>
</dbReference>
<dbReference type="EMBL" id="M38318">
    <property type="protein sequence ID" value="AAA33038.1"/>
    <property type="molecule type" value="mRNA"/>
</dbReference>
<dbReference type="PIR" id="S35244">
    <property type="entry name" value="S35244"/>
</dbReference>
<dbReference type="SMR" id="Q08184"/>
<dbReference type="GO" id="GO:0009507">
    <property type="term" value="C:chloroplast"/>
    <property type="evidence" value="ECO:0007669"/>
    <property type="project" value="UniProtKB-SubCell"/>
</dbReference>
<dbReference type="GO" id="GO:0016984">
    <property type="term" value="F:ribulose-bisphosphate carboxylase activity"/>
    <property type="evidence" value="ECO:0007669"/>
    <property type="project" value="UniProtKB-UniRule"/>
</dbReference>
<dbReference type="GO" id="GO:0009853">
    <property type="term" value="P:photorespiration"/>
    <property type="evidence" value="ECO:0007669"/>
    <property type="project" value="UniProtKB-KW"/>
</dbReference>
<dbReference type="GO" id="GO:0019253">
    <property type="term" value="P:reductive pentose-phosphate cycle"/>
    <property type="evidence" value="ECO:0007669"/>
    <property type="project" value="UniProtKB-UniRule"/>
</dbReference>
<dbReference type="CDD" id="cd03527">
    <property type="entry name" value="RuBisCO_small"/>
    <property type="match status" value="1"/>
</dbReference>
<dbReference type="FunFam" id="3.30.190.10:FF:000001">
    <property type="entry name" value="Ribulose bisphosphate carboxylase small chain, chloroplastic"/>
    <property type="match status" value="1"/>
</dbReference>
<dbReference type="Gene3D" id="3.30.190.10">
    <property type="entry name" value="Ribulose bisphosphate carboxylase, small subunit"/>
    <property type="match status" value="1"/>
</dbReference>
<dbReference type="HAMAP" id="MF_00859">
    <property type="entry name" value="RuBisCO_S_bact"/>
    <property type="match status" value="1"/>
</dbReference>
<dbReference type="InterPro" id="IPR024681">
    <property type="entry name" value="RuBisCO_ssu"/>
</dbReference>
<dbReference type="InterPro" id="IPR000894">
    <property type="entry name" value="RuBisCO_ssu_dom"/>
</dbReference>
<dbReference type="InterPro" id="IPR024680">
    <property type="entry name" value="RuBisCO_ssu_N"/>
</dbReference>
<dbReference type="InterPro" id="IPR036385">
    <property type="entry name" value="RuBisCO_ssu_sf"/>
</dbReference>
<dbReference type="PANTHER" id="PTHR31262">
    <property type="entry name" value="RIBULOSE BISPHOSPHATE CARBOXYLASE SMALL CHAIN 1, CHLOROPLASTIC"/>
    <property type="match status" value="1"/>
</dbReference>
<dbReference type="PANTHER" id="PTHR31262:SF10">
    <property type="entry name" value="RIBULOSE BISPHOSPHATE CARBOXYLASE SMALL SUBUNIT 1A, CHLOROPLASTIC-RELATED"/>
    <property type="match status" value="1"/>
</dbReference>
<dbReference type="Pfam" id="PF12338">
    <property type="entry name" value="RbcS"/>
    <property type="match status" value="1"/>
</dbReference>
<dbReference type="Pfam" id="PF00101">
    <property type="entry name" value="RuBisCO_small"/>
    <property type="match status" value="1"/>
</dbReference>
<dbReference type="PRINTS" id="PR00152">
    <property type="entry name" value="RUBISCOSMALL"/>
</dbReference>
<dbReference type="SMART" id="SM00961">
    <property type="entry name" value="RuBisCO_small"/>
    <property type="match status" value="1"/>
</dbReference>
<dbReference type="SUPFAM" id="SSF55239">
    <property type="entry name" value="RuBisCO, small subunit"/>
    <property type="match status" value="1"/>
</dbReference>
<comment type="function">
    <text evidence="1">RuBisCO catalyzes two reactions: the carboxylation of D-ribulose 1,5-bisphosphate, the primary event in carbon dioxide fixation, as well as the oxidative fragmentation of the pentose substrate. Both reactions occur simultaneously and in competition at the same active site. Although the small subunit is not catalytic it is essential for maximal activity.</text>
</comment>
<comment type="subunit">
    <text evidence="1">Heterohexadecamer of 8 large and 8 small subunits.</text>
</comment>
<comment type="subcellular location">
    <subcellularLocation>
        <location evidence="1">Plastid</location>
        <location evidence="1">Chloroplast</location>
    </subcellularLocation>
</comment>
<comment type="induction">
    <text evidence="2">Expressed at intermediate levels.</text>
</comment>
<comment type="miscellaneous">
    <text evidence="1">The basic functional RuBisCO is composed of a large chain homodimer in a 'head-to-tail' conformation. In form I RuBisCO this homodimer is arranged in a barrel-like tetramer with the small subunits forming a tetrameric 'cap' on each end of the 'barrel'.</text>
</comment>
<comment type="similarity">
    <text evidence="1">Belongs to the RuBisCO small chain family.</text>
</comment>
<proteinExistence type="evidence at transcript level"/>
<gene>
    <name evidence="1" type="primary">RBCS4</name>
    <name evidence="3" type="synonym">RBCS-4</name>
</gene>
<name>RBS4_MESCR</name>
<sequence>MASSLMSNAATTMAAATTTAQANMVAPFNGLKSISAFPVTRKNNDITSVASNGGRVQCMQVWPPLGMKKFETLSYLPPLSEESLLKEVQYLLNNGWVPCLEFEPTHGFVYREHGNTPGYYDGRYWTMWKLPMFGCTDPSQVVAELEEAKKAYPEAFIRIIGFDNVRQVQCVSFIAYKPASYGA</sequence>
<reference key="1">
    <citation type="journal article" date="1993" name="Mol. Gen. Genet.">
        <title>The six genes of the Rubisco small subunit multigene family from Mesembryanthemum crystallinum, a facultative CAM plant.</title>
        <authorList>
            <person name="Derocher E.J."/>
            <person name="Quigley F."/>
            <person name="Mache R."/>
            <person name="Bohnert H.J."/>
        </authorList>
    </citation>
    <scope>NUCLEOTIDE SEQUENCE</scope>
    <scope>INDUCTION</scope>
</reference>
<reference key="2">
    <citation type="journal article" date="1991" name="Plant Physiol.">
        <title>cDNA sequences for transcripts of the ribulose-1,5-bisphosphate carboxylase/oxygenase small subunit gene family of Mesembryanthemum crystallinum.</title>
        <authorList>
            <person name="Derocher E.J."/>
            <person name="Michalowski C.B."/>
            <person name="Bohnert H.J."/>
        </authorList>
    </citation>
    <scope>NUCLEOTIDE SEQUENCE</scope>
</reference>
<feature type="transit peptide" description="Chloroplast" evidence="1">
    <location>
        <begin position="1"/>
        <end position="57"/>
    </location>
</feature>
<feature type="chain" id="PRO_0000031530" description="Ribulose bisphosphate carboxylase small subunit, chloroplastic 4" evidence="1">
    <location>
        <begin position="58"/>
        <end position="183"/>
    </location>
</feature>
<keyword id="KW-0113">Calvin cycle</keyword>
<keyword id="KW-0120">Carbon dioxide fixation</keyword>
<keyword id="KW-0150">Chloroplast</keyword>
<keyword id="KW-0601">Photorespiration</keyword>
<keyword id="KW-0602">Photosynthesis</keyword>
<keyword id="KW-0934">Plastid</keyword>
<keyword id="KW-0809">Transit peptide</keyword>
<protein>
    <recommendedName>
        <fullName evidence="1">Ribulose bisphosphate carboxylase small subunit, chloroplastic 4</fullName>
        <shortName evidence="1">RuBisCO small subunit 4</shortName>
    </recommendedName>
</protein>
<accession>Q08184</accession>